<protein>
    <recommendedName>
        <fullName>Protein RecA</fullName>
    </recommendedName>
    <alternativeName>
        <fullName>Recombinase A</fullName>
    </alternativeName>
</protein>
<keyword id="KW-0067">ATP-binding</keyword>
<keyword id="KW-0963">Cytoplasm</keyword>
<keyword id="KW-0227">DNA damage</keyword>
<keyword id="KW-0233">DNA recombination</keyword>
<keyword id="KW-0234">DNA repair</keyword>
<keyword id="KW-0238">DNA-binding</keyword>
<keyword id="KW-0547">Nucleotide-binding</keyword>
<keyword id="KW-0742">SOS response</keyword>
<name>RECA_NEIPE</name>
<proteinExistence type="inferred from homology"/>
<sequence>STGSLGVDLALGVGGLPRGRVVEIFGPESSGKTTLCLEAIAQCQKNGGICAFIDAEHAFDPIYARKLGVKVEELYLSQPDTGEQALEICDTLVRSGGIDMVVVDSVAALVPKAEIEGEMGDSHVGLQARLMSQALRKLTGHIKRTNTLVVFINQIRMKIGVMFGSPETTTGGNALKFYASVRLDIRRTGQIKKGDDVIGNETKVKVIKNKVAPPFRQAEFDILYGEGISWEGELIDL</sequence>
<comment type="function">
    <text evidence="1">Can catalyze the hydrolysis of ATP in the presence of single-stranded DNA, the ATP-dependent uptake of single-stranded DNA by duplex DNA, and the ATP-dependent hybridization of homologous single-stranded DNAs. It interacts with LexA causing its activation and leading to its autocatalytic cleavage (By similarity).</text>
</comment>
<comment type="subcellular location">
    <subcellularLocation>
        <location evidence="1">Cytoplasm</location>
    </subcellularLocation>
</comment>
<comment type="similarity">
    <text evidence="2">Belongs to the RecA family.</text>
</comment>
<reference key="1">
    <citation type="submission" date="1998-01" db="EMBL/GenBank/DDBJ databases">
        <title>Do sexual bacteria have species?</title>
        <authorList>
            <person name="Smith N.H."/>
            <person name="Donovan G.M."/>
            <person name="Carpenter A."/>
            <person name="Spratt B.G."/>
        </authorList>
    </citation>
    <scope>NUCLEOTIDE SEQUENCE [GENOMIC DNA]</scope>
    <source>
        <strain>ATCC 10555 / DSM 18009 / CIP 73.11 / CCUG 17915 / LMG 5284 / NRL 30015 / NRRL B-1790</strain>
    </source>
</reference>
<dbReference type="EMBL" id="AJ223876">
    <property type="protein sequence ID" value="CAA11607.1"/>
    <property type="molecule type" value="Genomic_DNA"/>
</dbReference>
<dbReference type="SMR" id="O86403"/>
<dbReference type="STRING" id="33053.GCA_001556165_01346"/>
<dbReference type="GO" id="GO:0005829">
    <property type="term" value="C:cytosol"/>
    <property type="evidence" value="ECO:0007669"/>
    <property type="project" value="TreeGrafter"/>
</dbReference>
<dbReference type="GO" id="GO:0005524">
    <property type="term" value="F:ATP binding"/>
    <property type="evidence" value="ECO:0007669"/>
    <property type="project" value="UniProtKB-KW"/>
</dbReference>
<dbReference type="GO" id="GO:0016887">
    <property type="term" value="F:ATP hydrolysis activity"/>
    <property type="evidence" value="ECO:0007669"/>
    <property type="project" value="InterPro"/>
</dbReference>
<dbReference type="GO" id="GO:0140664">
    <property type="term" value="F:ATP-dependent DNA damage sensor activity"/>
    <property type="evidence" value="ECO:0007669"/>
    <property type="project" value="InterPro"/>
</dbReference>
<dbReference type="GO" id="GO:0003697">
    <property type="term" value="F:single-stranded DNA binding"/>
    <property type="evidence" value="ECO:0007669"/>
    <property type="project" value="InterPro"/>
</dbReference>
<dbReference type="GO" id="GO:0006310">
    <property type="term" value="P:DNA recombination"/>
    <property type="evidence" value="ECO:0007669"/>
    <property type="project" value="UniProtKB-KW"/>
</dbReference>
<dbReference type="GO" id="GO:0006281">
    <property type="term" value="P:DNA repair"/>
    <property type="evidence" value="ECO:0007669"/>
    <property type="project" value="UniProtKB-KW"/>
</dbReference>
<dbReference type="GO" id="GO:0009432">
    <property type="term" value="P:SOS response"/>
    <property type="evidence" value="ECO:0007669"/>
    <property type="project" value="UniProtKB-KW"/>
</dbReference>
<dbReference type="CDD" id="cd00983">
    <property type="entry name" value="RecA"/>
    <property type="match status" value="1"/>
</dbReference>
<dbReference type="FunFam" id="3.40.50.300:FF:000087">
    <property type="entry name" value="Recombinase RecA"/>
    <property type="match status" value="1"/>
</dbReference>
<dbReference type="Gene3D" id="3.40.50.300">
    <property type="entry name" value="P-loop containing nucleotide triphosphate hydrolases"/>
    <property type="match status" value="1"/>
</dbReference>
<dbReference type="InterPro" id="IPR003593">
    <property type="entry name" value="AAA+_ATPase"/>
</dbReference>
<dbReference type="InterPro" id="IPR013765">
    <property type="entry name" value="DNA_recomb/repair_RecA"/>
</dbReference>
<dbReference type="InterPro" id="IPR020584">
    <property type="entry name" value="DNA_recomb/repair_RecA_CS"/>
</dbReference>
<dbReference type="InterPro" id="IPR027417">
    <property type="entry name" value="P-loop_NTPase"/>
</dbReference>
<dbReference type="InterPro" id="IPR049428">
    <property type="entry name" value="RecA-like_N"/>
</dbReference>
<dbReference type="InterPro" id="IPR020588">
    <property type="entry name" value="RecA_ATP-bd"/>
</dbReference>
<dbReference type="InterPro" id="IPR020587">
    <property type="entry name" value="RecA_monomer-monomer_interface"/>
</dbReference>
<dbReference type="NCBIfam" id="TIGR02012">
    <property type="entry name" value="tigrfam_recA"/>
    <property type="match status" value="1"/>
</dbReference>
<dbReference type="PANTHER" id="PTHR45900:SF1">
    <property type="entry name" value="MITOCHONDRIAL DNA REPAIR PROTEIN RECA HOMOLOG-RELATED"/>
    <property type="match status" value="1"/>
</dbReference>
<dbReference type="PANTHER" id="PTHR45900">
    <property type="entry name" value="RECA"/>
    <property type="match status" value="1"/>
</dbReference>
<dbReference type="Pfam" id="PF00154">
    <property type="entry name" value="RecA"/>
    <property type="match status" value="1"/>
</dbReference>
<dbReference type="PRINTS" id="PR00142">
    <property type="entry name" value="RECA"/>
</dbReference>
<dbReference type="SMART" id="SM00382">
    <property type="entry name" value="AAA"/>
    <property type="match status" value="1"/>
</dbReference>
<dbReference type="SUPFAM" id="SSF52540">
    <property type="entry name" value="P-loop containing nucleoside triphosphate hydrolases"/>
    <property type="match status" value="1"/>
</dbReference>
<dbReference type="PROSITE" id="PS00321">
    <property type="entry name" value="RECA_1"/>
    <property type="match status" value="1"/>
</dbReference>
<dbReference type="PROSITE" id="PS50162">
    <property type="entry name" value="RECA_2"/>
    <property type="match status" value="1"/>
</dbReference>
<dbReference type="PROSITE" id="PS50163">
    <property type="entry name" value="RECA_3"/>
    <property type="match status" value="1"/>
</dbReference>
<gene>
    <name type="primary">recA</name>
</gene>
<feature type="chain" id="PRO_0000122780" description="Protein RecA">
    <location>
        <begin position="1" status="less than"/>
        <end position="237" status="greater than"/>
    </location>
</feature>
<feature type="binding site" evidence="1">
    <location>
        <begin position="26"/>
        <end position="33"/>
    </location>
    <ligand>
        <name>ATP</name>
        <dbReference type="ChEBI" id="CHEBI:30616"/>
    </ligand>
</feature>
<feature type="non-terminal residue">
    <location>
        <position position="1"/>
    </location>
</feature>
<feature type="non-terminal residue">
    <location>
        <position position="237"/>
    </location>
</feature>
<accession>O86403</accession>
<organism>
    <name type="scientific">Neisseria perflava</name>
    <dbReference type="NCBI Taxonomy" id="33053"/>
    <lineage>
        <taxon>Bacteria</taxon>
        <taxon>Pseudomonadati</taxon>
        <taxon>Pseudomonadota</taxon>
        <taxon>Betaproteobacteria</taxon>
        <taxon>Neisseriales</taxon>
        <taxon>Neisseriaceae</taxon>
        <taxon>Neisseria</taxon>
    </lineage>
</organism>
<evidence type="ECO:0000250" key="1"/>
<evidence type="ECO:0000305" key="2"/>